<comment type="function">
    <text evidence="2">Acid protease active in intracellular protein breakdown. Plays a role in APP processing following cleavage and activation by ADAM30 which leads to APP degradation.</text>
</comment>
<comment type="catalytic activity">
    <reaction>
        <text>Specificity similar to, but narrower than, that of pepsin A. Does not cleave the 4-Gln-|-His-5 bond in B chain of insulin.</text>
        <dbReference type="EC" id="3.4.23.5"/>
    </reaction>
</comment>
<comment type="subunit">
    <text evidence="2 3">Occurs as a mixture of both a single chain form and two types of two chain (light and heavy) forms. Interacts with ADAM30; this leads to activation of CTSD (By similarity). Interacts with GRN; stabilizes CTSD; increases its proteolytic activity (By similarity).</text>
</comment>
<comment type="subcellular location">
    <subcellularLocation>
        <location>Lysosome</location>
    </subcellularLocation>
    <subcellularLocation>
        <location evidence="1">Melanosome</location>
    </subcellularLocation>
    <subcellularLocation>
        <location evidence="1">Secreted</location>
        <location evidence="1">Extracellular space</location>
    </subcellularLocation>
</comment>
<comment type="PTM">
    <text evidence="2">N- and O-glycosylated.</text>
</comment>
<comment type="PTM">
    <text evidence="2">Undergoes proteolytic cleavage and activation by ADAM30.</text>
</comment>
<comment type="disease">
    <text>Defects in CTSD are a cause of congenital ovine neuronal ceroid lipofuscinosis (CONCL). CONCL is an autosomal recessive disorder. Newborn lambs are weak, trembling, and unable to rise and support their bodies. However, they are able to vocalize, support their heads, and to suckle if bottle-fed. At autopsy, the brains of affected lambs are strikingly small. The deep layers of the cerebral cortex show pronounced neuronal loss, reactive astrocytosis, and infiltration of macrophages. There is severe degeneration of hippocampal pyramidal neurons.</text>
</comment>
<comment type="similarity">
    <text evidence="8">Belongs to the peptidase A1 family.</text>
</comment>
<feature type="propeptide" id="PRO_0000025964" description="Activation peptide">
    <location>
        <begin position="1" status="less than"/>
        <end position="39"/>
    </location>
</feature>
<feature type="chain" id="PRO_0000025965" description="Cathepsin D">
    <location>
        <begin position="40"/>
        <end position="365" status="greater than"/>
    </location>
</feature>
<feature type="domain" description="Peptidase A1" evidence="5">
    <location>
        <begin position="54"/>
        <end position="365" status="greater than"/>
    </location>
</feature>
<feature type="active site" evidence="6">
    <location>
        <position position="72"/>
    </location>
</feature>
<feature type="active site" evidence="6">
    <location>
        <position position="268"/>
    </location>
</feature>
<feature type="glycosylation site" description="N-linked (GlcNAc...) asparagine" evidence="4">
    <location>
        <position position="109"/>
    </location>
</feature>
<feature type="glycosylation site" description="N-linked (GlcNAc...) asparagine" evidence="4">
    <location>
        <position position="236"/>
    </location>
</feature>
<feature type="disulfide bond" evidence="1">
    <location>
        <begin position="66"/>
        <end position="135"/>
    </location>
</feature>
<feature type="disulfide bond" evidence="1">
    <location>
        <begin position="85"/>
        <end position="92"/>
    </location>
</feature>
<feature type="disulfide bond" evidence="1">
    <location>
        <begin position="259"/>
        <end position="263"/>
    </location>
</feature>
<feature type="disulfide bond" evidence="1">
    <location>
        <begin position="302"/>
        <end position="339"/>
    </location>
</feature>
<feature type="sequence variant" description="In CONCL; inactive." evidence="7">
    <original>D</original>
    <variation>N</variation>
    <location>
        <position position="268"/>
    </location>
</feature>
<feature type="non-terminal residue">
    <location>
        <position position="1"/>
    </location>
</feature>
<feature type="non-terminal residue">
    <location>
        <position position="365"/>
    </location>
</feature>
<organism>
    <name type="scientific">Ovis aries</name>
    <name type="common">Sheep</name>
    <dbReference type="NCBI Taxonomy" id="9940"/>
    <lineage>
        <taxon>Eukaryota</taxon>
        <taxon>Metazoa</taxon>
        <taxon>Chordata</taxon>
        <taxon>Craniata</taxon>
        <taxon>Vertebrata</taxon>
        <taxon>Euteleostomi</taxon>
        <taxon>Mammalia</taxon>
        <taxon>Eutheria</taxon>
        <taxon>Laurasiatheria</taxon>
        <taxon>Artiodactyla</taxon>
        <taxon>Ruminantia</taxon>
        <taxon>Pecora</taxon>
        <taxon>Bovidae</taxon>
        <taxon>Caprinae</taxon>
        <taxon>Ovis</taxon>
    </lineage>
</organism>
<sequence>LHKFTSNRRTMSEAMGPVEHLIAKGPISKYATREPAVRQGPIPELLTNYMDAQYYGEIGIGTPPQCFTVVFDTGSANLWVPSIHCKLLDIACWVHHKYNSDKSSTYVKNGTTFDIHYGSGSLSGYLSQDTVSVPCNPSSSSPGGVTVQRQTFGEAIKQPGVVFIAAKFDGILGMAYPRISVNNVLPVFDNLMRQKLVDKNVFSFFLNRDPKAQPGEELMLGGTDSKYYRGSLTYHNVTRQAYWQIHMDQLDVGSSLTVCKGGCEAIVDTGTSLMVGPVDEVRELHKAIGAVPLIQGEYMIPCEKVSSLPQVTLKLGGKDYTLSPEDYTLKVSQAGTTVCLSGFMGMDIPPPGGPLWILGDVFIGR</sequence>
<name>CATD_SHEEP</name>
<evidence type="ECO:0000250" key="1"/>
<evidence type="ECO:0000250" key="2">
    <source>
        <dbReference type="UniProtKB" id="P07339"/>
    </source>
</evidence>
<evidence type="ECO:0000250" key="3">
    <source>
        <dbReference type="UniProtKB" id="P18242"/>
    </source>
</evidence>
<evidence type="ECO:0000255" key="4"/>
<evidence type="ECO:0000255" key="5">
    <source>
        <dbReference type="PROSITE-ProRule" id="PRU01103"/>
    </source>
</evidence>
<evidence type="ECO:0000255" key="6">
    <source>
        <dbReference type="PROSITE-ProRule" id="PRU10094"/>
    </source>
</evidence>
<evidence type="ECO:0000269" key="7">
    <source>
    </source>
</evidence>
<evidence type="ECO:0000305" key="8"/>
<reference key="1">
    <citation type="journal article" date="2000" name="EMBO J.">
        <title>A mutation in the ovine cathepsin D gene causes a congenital lysosomal storage disease with profound neurodegeneration.</title>
        <authorList>
            <person name="Tyynela J."/>
            <person name="Sohar I."/>
            <person name="Sleat D.E."/>
            <person name="Gin R.M."/>
            <person name="Donnelly R.J."/>
            <person name="Baumann M."/>
            <person name="Haltia M."/>
            <person name="Lobel P."/>
        </authorList>
    </citation>
    <scope>NUCLEOTIDE SEQUENCE [MRNA]</scope>
    <scope>VARIANT CONCL ASN-268</scope>
    <source>
        <strain>White Swedish Landrace</strain>
    </source>
</reference>
<accession>Q9MZS8</accession>
<gene>
    <name type="primary">CTSD</name>
</gene>
<keyword id="KW-0064">Aspartyl protease</keyword>
<keyword id="KW-0225">Disease variant</keyword>
<keyword id="KW-1015">Disulfide bond</keyword>
<keyword id="KW-0325">Glycoprotein</keyword>
<keyword id="KW-0378">Hydrolase</keyword>
<keyword id="KW-0458">Lysosome</keyword>
<keyword id="KW-0645">Protease</keyword>
<keyword id="KW-1185">Reference proteome</keyword>
<keyword id="KW-0964">Secreted</keyword>
<keyword id="KW-0865">Zymogen</keyword>
<protein>
    <recommendedName>
        <fullName>Cathepsin D</fullName>
        <ecNumber>3.4.23.5</ecNumber>
    </recommendedName>
</protein>
<proteinExistence type="evidence at protein level"/>
<dbReference type="EC" id="3.4.23.5"/>
<dbReference type="EMBL" id="AF164143">
    <property type="protein sequence ID" value="AAF80494.1"/>
    <property type="molecule type" value="mRNA"/>
</dbReference>
<dbReference type="SMR" id="Q9MZS8"/>
<dbReference type="STRING" id="9940.ENSOARP00000004202"/>
<dbReference type="MEROPS" id="A01.009"/>
<dbReference type="GlyCosmos" id="Q9MZS8">
    <property type="glycosylation" value="2 sites, No reported glycans"/>
</dbReference>
<dbReference type="PaxDb" id="9940-ENSOARP00000004202"/>
<dbReference type="eggNOG" id="KOG1339">
    <property type="taxonomic scope" value="Eukaryota"/>
</dbReference>
<dbReference type="Proteomes" id="UP000002356">
    <property type="component" value="Unplaced"/>
</dbReference>
<dbReference type="GO" id="GO:0005576">
    <property type="term" value="C:extracellular region"/>
    <property type="evidence" value="ECO:0007669"/>
    <property type="project" value="UniProtKB-SubCell"/>
</dbReference>
<dbReference type="GO" id="GO:0005764">
    <property type="term" value="C:lysosome"/>
    <property type="evidence" value="ECO:0000250"/>
    <property type="project" value="UniProtKB"/>
</dbReference>
<dbReference type="GO" id="GO:0042470">
    <property type="term" value="C:melanosome"/>
    <property type="evidence" value="ECO:0007669"/>
    <property type="project" value="UniProtKB-SubCell"/>
</dbReference>
<dbReference type="GO" id="GO:0004190">
    <property type="term" value="F:aspartic-type endopeptidase activity"/>
    <property type="evidence" value="ECO:0007669"/>
    <property type="project" value="UniProtKB-KW"/>
</dbReference>
<dbReference type="GO" id="GO:0006508">
    <property type="term" value="P:proteolysis"/>
    <property type="evidence" value="ECO:0007669"/>
    <property type="project" value="UniProtKB-KW"/>
</dbReference>
<dbReference type="CDD" id="cd05490">
    <property type="entry name" value="Cathepsin_D2"/>
    <property type="match status" value="1"/>
</dbReference>
<dbReference type="FunFam" id="2.40.70.10:FF:000039">
    <property type="entry name" value="Cathepsin D preproprotein"/>
    <property type="match status" value="1"/>
</dbReference>
<dbReference type="FunFam" id="2.40.70.10:FF:000047">
    <property type="entry name" value="Cathepsin D preproprotein"/>
    <property type="match status" value="1"/>
</dbReference>
<dbReference type="Gene3D" id="2.40.70.10">
    <property type="entry name" value="Acid Proteases"/>
    <property type="match status" value="2"/>
</dbReference>
<dbReference type="InterPro" id="IPR001461">
    <property type="entry name" value="Aspartic_peptidase_A1"/>
</dbReference>
<dbReference type="InterPro" id="IPR001969">
    <property type="entry name" value="Aspartic_peptidase_AS"/>
</dbReference>
<dbReference type="InterPro" id="IPR033144">
    <property type="entry name" value="Cathepsin_D"/>
</dbReference>
<dbReference type="InterPro" id="IPR033121">
    <property type="entry name" value="PEPTIDASE_A1"/>
</dbReference>
<dbReference type="InterPro" id="IPR021109">
    <property type="entry name" value="Peptidase_aspartic_dom_sf"/>
</dbReference>
<dbReference type="PANTHER" id="PTHR47966">
    <property type="entry name" value="BETA-SITE APP-CLEAVING ENZYME, ISOFORM A-RELATED"/>
    <property type="match status" value="1"/>
</dbReference>
<dbReference type="PANTHER" id="PTHR47966:SF42">
    <property type="entry name" value="CATHEPSIN D"/>
    <property type="match status" value="1"/>
</dbReference>
<dbReference type="Pfam" id="PF00026">
    <property type="entry name" value="Asp"/>
    <property type="match status" value="1"/>
</dbReference>
<dbReference type="PRINTS" id="PR00792">
    <property type="entry name" value="PEPSIN"/>
</dbReference>
<dbReference type="SUPFAM" id="SSF50630">
    <property type="entry name" value="Acid proteases"/>
    <property type="match status" value="1"/>
</dbReference>
<dbReference type="PROSITE" id="PS00141">
    <property type="entry name" value="ASP_PROTEASE"/>
    <property type="match status" value="2"/>
</dbReference>
<dbReference type="PROSITE" id="PS51767">
    <property type="entry name" value="PEPTIDASE_A1"/>
    <property type="match status" value="1"/>
</dbReference>